<evidence type="ECO:0000250" key="1"/>
<evidence type="ECO:0000250" key="2">
    <source>
        <dbReference type="UniProtKB" id="P02820"/>
    </source>
</evidence>
<evidence type="ECO:0000250" key="3">
    <source>
        <dbReference type="UniProtKB" id="P86546"/>
    </source>
</evidence>
<evidence type="ECO:0000255" key="4">
    <source>
        <dbReference type="PROSITE-ProRule" id="PRU00463"/>
    </source>
</evidence>
<evidence type="ECO:0000269" key="5">
    <source ref="1"/>
</evidence>
<evidence type="ECO:0000305" key="6"/>
<dbReference type="SMR" id="P83489"/>
<dbReference type="GO" id="GO:0005737">
    <property type="term" value="C:cytoplasm"/>
    <property type="evidence" value="ECO:0000250"/>
    <property type="project" value="UniProtKB"/>
</dbReference>
<dbReference type="GO" id="GO:0005576">
    <property type="term" value="C:extracellular region"/>
    <property type="evidence" value="ECO:0007669"/>
    <property type="project" value="UniProtKB-SubCell"/>
</dbReference>
<dbReference type="GO" id="GO:0005509">
    <property type="term" value="F:calcium ion binding"/>
    <property type="evidence" value="ECO:0007669"/>
    <property type="project" value="InterPro"/>
</dbReference>
<dbReference type="GO" id="GO:0005179">
    <property type="term" value="F:hormone activity"/>
    <property type="evidence" value="ECO:0000250"/>
    <property type="project" value="UniProtKB"/>
</dbReference>
<dbReference type="GO" id="GO:0046848">
    <property type="term" value="F:hydroxyapatite binding"/>
    <property type="evidence" value="ECO:0007669"/>
    <property type="project" value="TreeGrafter"/>
</dbReference>
<dbReference type="GO" id="GO:0008147">
    <property type="term" value="F:structural constituent of bone"/>
    <property type="evidence" value="ECO:0000250"/>
    <property type="project" value="UniProtKB"/>
</dbReference>
<dbReference type="GO" id="GO:0031214">
    <property type="term" value="P:biomineral tissue development"/>
    <property type="evidence" value="ECO:0007669"/>
    <property type="project" value="UniProtKB-KW"/>
</dbReference>
<dbReference type="GO" id="GO:0060348">
    <property type="term" value="P:bone development"/>
    <property type="evidence" value="ECO:0007669"/>
    <property type="project" value="InterPro"/>
</dbReference>
<dbReference type="GO" id="GO:0007420">
    <property type="term" value="P:brain development"/>
    <property type="evidence" value="ECO:0000250"/>
    <property type="project" value="UniProtKB"/>
</dbReference>
<dbReference type="GO" id="GO:0032869">
    <property type="term" value="P:cellular response to insulin stimulus"/>
    <property type="evidence" value="ECO:0000250"/>
    <property type="project" value="UniProtKB"/>
</dbReference>
<dbReference type="GO" id="GO:0050890">
    <property type="term" value="P:cognition"/>
    <property type="evidence" value="ECO:0000250"/>
    <property type="project" value="UniProtKB"/>
</dbReference>
<dbReference type="GO" id="GO:0042593">
    <property type="term" value="P:glucose homeostasis"/>
    <property type="evidence" value="ECO:0000250"/>
    <property type="project" value="UniProtKB"/>
</dbReference>
<dbReference type="GO" id="GO:0007611">
    <property type="term" value="P:learning or memory"/>
    <property type="evidence" value="ECO:0000250"/>
    <property type="project" value="UniProtKB"/>
</dbReference>
<dbReference type="GO" id="GO:1903011">
    <property type="term" value="P:negative regulation of bone development"/>
    <property type="evidence" value="ECO:0000250"/>
    <property type="project" value="UniProtKB"/>
</dbReference>
<dbReference type="GO" id="GO:0001649">
    <property type="term" value="P:osteoblast differentiation"/>
    <property type="evidence" value="ECO:0007669"/>
    <property type="project" value="TreeGrafter"/>
</dbReference>
<dbReference type="GO" id="GO:0001956">
    <property type="term" value="P:positive regulation of neurotransmitter secretion"/>
    <property type="evidence" value="ECO:0000250"/>
    <property type="project" value="UniProtKB"/>
</dbReference>
<dbReference type="GO" id="GO:0030500">
    <property type="term" value="P:regulation of bone mineralization"/>
    <property type="evidence" value="ECO:0007669"/>
    <property type="project" value="InterPro"/>
</dbReference>
<dbReference type="GO" id="GO:1900076">
    <property type="term" value="P:regulation of cellular response to insulin stimulus"/>
    <property type="evidence" value="ECO:0007669"/>
    <property type="project" value="InterPro"/>
</dbReference>
<dbReference type="GO" id="GO:2000224">
    <property type="term" value="P:regulation of testosterone biosynthetic process"/>
    <property type="evidence" value="ECO:0000250"/>
    <property type="project" value="UniProtKB"/>
</dbReference>
<dbReference type="GO" id="GO:0032571">
    <property type="term" value="P:response to vitamin K"/>
    <property type="evidence" value="ECO:0007669"/>
    <property type="project" value="InterPro"/>
</dbReference>
<dbReference type="GO" id="GO:0044342">
    <property type="term" value="P:type B pancreatic cell proliferation"/>
    <property type="evidence" value="ECO:0000250"/>
    <property type="project" value="UniProtKB"/>
</dbReference>
<dbReference type="InterPro" id="IPR035972">
    <property type="entry name" value="GLA-like_dom_SF"/>
</dbReference>
<dbReference type="InterPro" id="IPR000294">
    <property type="entry name" value="GLA_domain"/>
</dbReference>
<dbReference type="InterPro" id="IPR039176">
    <property type="entry name" value="Osteocalcin"/>
</dbReference>
<dbReference type="InterPro" id="IPR002384">
    <property type="entry name" value="Osteocalcin/MGP"/>
</dbReference>
<dbReference type="PANTHER" id="PTHR14235">
    <property type="entry name" value="OSTEOCALCIN"/>
    <property type="match status" value="1"/>
</dbReference>
<dbReference type="PANTHER" id="PTHR14235:SF0">
    <property type="entry name" value="OSTEOCALCIN"/>
    <property type="match status" value="1"/>
</dbReference>
<dbReference type="PRINTS" id="PR00002">
    <property type="entry name" value="GLABONE"/>
</dbReference>
<dbReference type="SMART" id="SM00069">
    <property type="entry name" value="GLA"/>
    <property type="match status" value="1"/>
</dbReference>
<dbReference type="SUPFAM" id="SSF57630">
    <property type="entry name" value="GLA-domain"/>
    <property type="match status" value="1"/>
</dbReference>
<dbReference type="PROSITE" id="PS00011">
    <property type="entry name" value="GLA_1"/>
    <property type="match status" value="1"/>
</dbReference>
<dbReference type="PROSITE" id="PS50998">
    <property type="entry name" value="GLA_2"/>
    <property type="match status" value="1"/>
</dbReference>
<reference evidence="6" key="1">
    <citation type="journal article" date="2002" name="Geology">
        <title>Sequence preservation of osteocalcin protein and mitochondrial DNA in bison bones older than 55 ka.</title>
        <authorList>
            <person name="Nielsen-Marsh C.M."/>
            <person name="Ostrom P.H."/>
            <person name="Gandhi H."/>
            <person name="Shapiro B."/>
            <person name="Cooper A."/>
            <person name="Hauschka P.V."/>
            <person name="Collins M.J."/>
        </authorList>
    </citation>
    <scope>PROTEIN SEQUENCE</scope>
    <scope>HYDROXYLATION AT PRO-9</scope>
    <scope>GAMMA-CARBOXYGLUTAMATION AT GLU-17; GLU-21 AND GLU-24</scope>
    <scope>MASS SPECTROMETRY</scope>
    <source>
        <tissue>Bone</tissue>
    </source>
</reference>
<keyword id="KW-0091">Biomineralization</keyword>
<keyword id="KW-0106">Calcium</keyword>
<keyword id="KW-0903">Direct protein sequencing</keyword>
<keyword id="KW-1015">Disulfide bond</keyword>
<keyword id="KW-0952">Extinct organism protein</keyword>
<keyword id="KW-0301">Gamma-carboxyglutamic acid</keyword>
<keyword id="KW-0372">Hormone</keyword>
<keyword id="KW-0379">Hydroxylation</keyword>
<keyword id="KW-0479">Metal-binding</keyword>
<keyword id="KW-0964">Secreted</keyword>
<name>OSTCN_BISPR</name>
<feature type="chain" id="PRO_0000148895" description="Osteocalcin">
    <location>
        <begin position="1"/>
        <end position="49"/>
    </location>
</feature>
<feature type="domain" description="Gla" evidence="4">
    <location>
        <begin position="1"/>
        <end position="47"/>
    </location>
</feature>
<feature type="binding site" evidence="2">
    <location>
        <position position="17"/>
    </location>
    <ligand>
        <name>Ca(2+)</name>
        <dbReference type="ChEBI" id="CHEBI:29108"/>
        <label>1</label>
    </ligand>
</feature>
<feature type="binding site" evidence="2">
    <location>
        <position position="21"/>
    </location>
    <ligand>
        <name>Ca(2+)</name>
        <dbReference type="ChEBI" id="CHEBI:29108"/>
        <label>2</label>
    </ligand>
</feature>
<feature type="binding site" evidence="2">
    <location>
        <position position="24"/>
    </location>
    <ligand>
        <name>Ca(2+)</name>
        <dbReference type="ChEBI" id="CHEBI:29108"/>
        <label>2</label>
    </ligand>
</feature>
<feature type="binding site" evidence="2">
    <location>
        <position position="24"/>
    </location>
    <ligand>
        <name>Ca(2+)</name>
        <dbReference type="ChEBI" id="CHEBI:29108"/>
        <label>3</label>
    </ligand>
</feature>
<feature type="binding site" evidence="2">
    <location>
        <position position="30"/>
    </location>
    <ligand>
        <name>Ca(2+)</name>
        <dbReference type="ChEBI" id="CHEBI:29108"/>
        <label>3</label>
    </ligand>
</feature>
<feature type="modified residue" description="Hydroxyproline" evidence="5">
    <location>
        <position position="9"/>
    </location>
</feature>
<feature type="modified residue" description="4-carboxyglutamate" evidence="4 5">
    <location>
        <position position="17"/>
    </location>
</feature>
<feature type="modified residue" description="4-carboxyglutamate" evidence="4 5">
    <location>
        <position position="21"/>
    </location>
</feature>
<feature type="modified residue" description="4-carboxyglutamate" evidence="4 5">
    <location>
        <position position="24"/>
    </location>
</feature>
<feature type="disulfide bond">
    <location>
        <begin position="23"/>
        <end position="29"/>
    </location>
</feature>
<sequence>YLDHGLGAPAPYPDPLEPKREVCELNPDCDELADHIGFQEAYRRFYGPV</sequence>
<proteinExistence type="evidence at protein level"/>
<comment type="function">
    <text evidence="3">The carboxylated form is one of the main organic components of the bone matrix, which constitutes 1-2% of the total bone protein: it acts as a negative regulator of bone formation and is required to limit bone formation without impairing bone resorption or mineralization. The carboxylated form binds strongly to apatite and calcium.</text>
</comment>
<comment type="function">
    <text evidence="3">The uncarboxylated form acts as a hormone secreted by osteoblasts, which regulates different cellular processes, such as energy metabolism, male fertility and brain development. Regulates of energy metabolism by acting as a hormone favoring pancreatic beta-cell proliferation, insulin secretion and sensitivity and energy expenditure. Uncarboxylated osteocalcin hormone also promotes testosterone production in the testes: acts as a ligand for G protein-coupled receptor GPRC6A at the surface of Leydig cells, initiating a signaling response that promotes the expression of enzymes required for testosterone synthesis in a CREB-dependent manner. Also acts as a regulator of brain development: osteocalcin hormone crosses the blood-brain barrier and acts as a ligand for GPR158 on neurons, initiating a signaling response that prevents neuronal apoptosis in the hippocampus, favors the synthesis of all monoamine neurotransmitters and inhibits that of gamma-aminobutyric acid (GABA). Osteocalcin also crosses the placenta during pregnancy and maternal osteocalcin is required for fetal brain development.</text>
</comment>
<comment type="subcellular location">
    <subcellularLocation>
        <location evidence="2">Secreted</location>
    </subcellularLocation>
</comment>
<comment type="PTM">
    <text evidence="1">Gamma-carboxyglutamic acid residues are formed by vitamin K dependent carboxylation. These residues are essential for the binding of calcium (By similarity).</text>
</comment>
<comment type="mass spectrometry"/>
<comment type="miscellaneous">
    <text>Sequence data obtained by MS from permafrost fossilized bones about 55.6 thousand years old.</text>
</comment>
<comment type="similarity">
    <text evidence="6">Belongs to the osteocalcin/matrix Gla protein family.</text>
</comment>
<comment type="online information" name="Protein Spotlight">
    <link uri="https://www.proteinspotlight.org/back_issues/046"/>
    <text>A small blast from the past - Issue 46 of May 2004</text>
</comment>
<organism>
    <name type="scientific">Bison priscus</name>
    <name type="common">Steppe wisent</name>
    <name type="synonym">Steppe bison</name>
    <dbReference type="NCBI Taxonomy" id="268291"/>
    <lineage>
        <taxon>Eukaryota</taxon>
        <taxon>Metazoa</taxon>
        <taxon>Chordata</taxon>
        <taxon>Craniata</taxon>
        <taxon>Vertebrata</taxon>
        <taxon>Euteleostomi</taxon>
        <taxon>Mammalia</taxon>
        <taxon>Eutheria</taxon>
        <taxon>Laurasiatheria</taxon>
        <taxon>Artiodactyla</taxon>
        <taxon>Ruminantia</taxon>
        <taxon>Pecora</taxon>
        <taxon>Bovidae</taxon>
        <taxon>Bovinae</taxon>
        <taxon>Bison</taxon>
    </lineage>
</organism>
<gene>
    <name type="primary">BGLAP</name>
</gene>
<accession>P83489</accession>
<protein>
    <recommendedName>
        <fullName>Osteocalcin</fullName>
    </recommendedName>
    <alternativeName>
        <fullName>Bone Gla protein</fullName>
        <shortName>BGP</shortName>
    </alternativeName>
    <alternativeName>
        <fullName>Gamma-carboxyglutamic acid-containing protein</fullName>
    </alternativeName>
</protein>